<gene>
    <name evidence="1" type="primary">rbfA</name>
    <name type="ordered locus">BRADO0054</name>
</gene>
<sequence length="138" mass="15544">MPRHHQRGSAASGGSQRQLRVAETVRHAVADILSQGSAHDPDLEGHIITVPEVRMSPDLKLATIYIMPLGGRDTDVVLAALERNKKFLRGEVARRVNLKFAPDIRFRVDERFDEAERIEKLLRTPAVQRDLNSDLEES</sequence>
<name>RBFA_BRASO</name>
<comment type="function">
    <text evidence="1">One of several proteins that assist in the late maturation steps of the functional core of the 30S ribosomal subunit. Associates with free 30S ribosomal subunits (but not with 30S subunits that are part of 70S ribosomes or polysomes). Required for efficient processing of 16S rRNA. May interact with the 5'-terminal helix region of 16S rRNA.</text>
</comment>
<comment type="subunit">
    <text evidence="1">Monomer. Binds 30S ribosomal subunits, but not 50S ribosomal subunits or 70S ribosomes.</text>
</comment>
<comment type="subcellular location">
    <subcellularLocation>
        <location evidence="1">Cytoplasm</location>
    </subcellularLocation>
</comment>
<comment type="similarity">
    <text evidence="1">Belongs to the RbfA family.</text>
</comment>
<protein>
    <recommendedName>
        <fullName evidence="1">Ribosome-binding factor A</fullName>
    </recommendedName>
</protein>
<reference key="1">
    <citation type="journal article" date="2007" name="Science">
        <title>Legumes symbioses: absence of nod genes in photosynthetic bradyrhizobia.</title>
        <authorList>
            <person name="Giraud E."/>
            <person name="Moulin L."/>
            <person name="Vallenet D."/>
            <person name="Barbe V."/>
            <person name="Cytryn E."/>
            <person name="Avarre J.-C."/>
            <person name="Jaubert M."/>
            <person name="Simon D."/>
            <person name="Cartieaux F."/>
            <person name="Prin Y."/>
            <person name="Bena G."/>
            <person name="Hannibal L."/>
            <person name="Fardoux J."/>
            <person name="Kojadinovic M."/>
            <person name="Vuillet L."/>
            <person name="Lajus A."/>
            <person name="Cruveiller S."/>
            <person name="Rouy Z."/>
            <person name="Mangenot S."/>
            <person name="Segurens B."/>
            <person name="Dossat C."/>
            <person name="Franck W.L."/>
            <person name="Chang W.-S."/>
            <person name="Saunders E."/>
            <person name="Bruce D."/>
            <person name="Richardson P."/>
            <person name="Normand P."/>
            <person name="Dreyfus B."/>
            <person name="Pignol D."/>
            <person name="Stacey G."/>
            <person name="Emerich D."/>
            <person name="Vermeglio A."/>
            <person name="Medigue C."/>
            <person name="Sadowsky M."/>
        </authorList>
    </citation>
    <scope>NUCLEOTIDE SEQUENCE [LARGE SCALE GENOMIC DNA]</scope>
    <source>
        <strain>ORS 278</strain>
    </source>
</reference>
<accession>A4YJF0</accession>
<dbReference type="EMBL" id="CU234118">
    <property type="protein sequence ID" value="CAL74026.1"/>
    <property type="molecule type" value="Genomic_DNA"/>
</dbReference>
<dbReference type="RefSeq" id="WP_011923328.1">
    <property type="nucleotide sequence ID" value="NC_009445.1"/>
</dbReference>
<dbReference type="SMR" id="A4YJF0"/>
<dbReference type="STRING" id="114615.BRADO0054"/>
<dbReference type="KEGG" id="bra:BRADO0054"/>
<dbReference type="eggNOG" id="COG0858">
    <property type="taxonomic scope" value="Bacteria"/>
</dbReference>
<dbReference type="HOGENOM" id="CLU_089475_1_0_5"/>
<dbReference type="OrthoDB" id="9805051at2"/>
<dbReference type="Proteomes" id="UP000001994">
    <property type="component" value="Chromosome"/>
</dbReference>
<dbReference type="GO" id="GO:0005829">
    <property type="term" value="C:cytosol"/>
    <property type="evidence" value="ECO:0007669"/>
    <property type="project" value="TreeGrafter"/>
</dbReference>
<dbReference type="GO" id="GO:0043024">
    <property type="term" value="F:ribosomal small subunit binding"/>
    <property type="evidence" value="ECO:0007669"/>
    <property type="project" value="TreeGrafter"/>
</dbReference>
<dbReference type="GO" id="GO:0030490">
    <property type="term" value="P:maturation of SSU-rRNA"/>
    <property type="evidence" value="ECO:0007669"/>
    <property type="project" value="UniProtKB-UniRule"/>
</dbReference>
<dbReference type="Gene3D" id="3.30.300.20">
    <property type="match status" value="1"/>
</dbReference>
<dbReference type="HAMAP" id="MF_00003">
    <property type="entry name" value="RbfA"/>
    <property type="match status" value="1"/>
</dbReference>
<dbReference type="InterPro" id="IPR015946">
    <property type="entry name" value="KH_dom-like_a/b"/>
</dbReference>
<dbReference type="InterPro" id="IPR000238">
    <property type="entry name" value="RbfA"/>
</dbReference>
<dbReference type="InterPro" id="IPR023799">
    <property type="entry name" value="RbfA_dom_sf"/>
</dbReference>
<dbReference type="InterPro" id="IPR020053">
    <property type="entry name" value="Ribosome-bd_factorA_CS"/>
</dbReference>
<dbReference type="NCBIfam" id="NF001802">
    <property type="entry name" value="PRK00521.2-5"/>
    <property type="match status" value="1"/>
</dbReference>
<dbReference type="NCBIfam" id="TIGR00082">
    <property type="entry name" value="rbfA"/>
    <property type="match status" value="1"/>
</dbReference>
<dbReference type="PANTHER" id="PTHR33515">
    <property type="entry name" value="RIBOSOME-BINDING FACTOR A, CHLOROPLASTIC-RELATED"/>
    <property type="match status" value="1"/>
</dbReference>
<dbReference type="PANTHER" id="PTHR33515:SF1">
    <property type="entry name" value="RIBOSOME-BINDING FACTOR A, CHLOROPLASTIC-RELATED"/>
    <property type="match status" value="1"/>
</dbReference>
<dbReference type="Pfam" id="PF02033">
    <property type="entry name" value="RBFA"/>
    <property type="match status" value="1"/>
</dbReference>
<dbReference type="SUPFAM" id="SSF89919">
    <property type="entry name" value="Ribosome-binding factor A, RbfA"/>
    <property type="match status" value="1"/>
</dbReference>
<dbReference type="PROSITE" id="PS01319">
    <property type="entry name" value="RBFA"/>
    <property type="match status" value="1"/>
</dbReference>
<feature type="chain" id="PRO_1000000077" description="Ribosome-binding factor A">
    <location>
        <begin position="1"/>
        <end position="138"/>
    </location>
</feature>
<evidence type="ECO:0000255" key="1">
    <source>
        <dbReference type="HAMAP-Rule" id="MF_00003"/>
    </source>
</evidence>
<proteinExistence type="inferred from homology"/>
<keyword id="KW-0963">Cytoplasm</keyword>
<keyword id="KW-1185">Reference proteome</keyword>
<keyword id="KW-0690">Ribosome biogenesis</keyword>
<organism>
    <name type="scientific">Bradyrhizobium sp. (strain ORS 278)</name>
    <dbReference type="NCBI Taxonomy" id="114615"/>
    <lineage>
        <taxon>Bacteria</taxon>
        <taxon>Pseudomonadati</taxon>
        <taxon>Pseudomonadota</taxon>
        <taxon>Alphaproteobacteria</taxon>
        <taxon>Hyphomicrobiales</taxon>
        <taxon>Nitrobacteraceae</taxon>
        <taxon>Bradyrhizobium</taxon>
    </lineage>
</organism>